<comment type="function">
    <text evidence="1 4 5">Binds CpG islands in promoters where the DNA is methylated at position 5 of cytosine within CpG dinucleotides (PubMed:9774669). Binds hemimethylated DNA as well (By similarity). Recruits histone deacetylases and DNA methyltransferases to chromatin (By similarity). Acts as a component of the histone deacetylase NuRD complex which participates in the remodeling of chromatin (By similarity). Acts as transcriptional repressor and plays a role in gene silencing (By similarity). Functions as a scaffold protein, targeting GATAD2A and GATAD2B to chromatin to promote repression (By similarity). May enhance the activation of some unmethylated cAMP-responsive promoters (By similarity). Selectively represses transcription activity of methylated rRNA promoters (PubMed:14610093).</text>
</comment>
<comment type="subunit">
    <text evidence="1">Heterodimer with MBD3 (via N-terminus) (By similarity). Component of the MeCP1 complex that contains HDAC1 and HDAC2 (By similarity). Component of the nucleosome remodeling and deacetylase (NuRD) repressor complex, composed of core proteins MTA1, MTA2, MTA3, RBBP4, RBBP7, HDAC1, HDAC2, MBD2, MBD3, and peripherally associated proteins CDK2AP1, CDK2AP2, GATAD2A, GATAD2B, CHD3, CHD4 and CHD5 (By similarity). The exact stoichiometry of the NuRD complex is unknown, and some subunits such as MBD2 and MBD3, GATAD2A and GATAD2B, and CHD3, CHD4 and CHD5 define mutually exclusive NuRD complexes (By similarity). Interacts with CDK2AP1 (By similarity). Interacts with DHX9 (By similarity). Interacts with DNMT1 (By similarity). Interacts with GATAD2A/p66-alpha (By similarity). Interacts with GATAD2B/p66-beta (By similarity). Interacts with GPN1 (By similarity). Interacts with MIZF (By similarity). Interacts with PRMT5 (By similarity). Interacts with SIN3A (By similarity). Interacts with SPHK2 (By similarity).</text>
</comment>
<comment type="interaction">
    <interactant intactId="EBI-5716946">
        <id>Q9Z2E1</id>
    </interactant>
    <interactant intactId="EBI-5716946">
        <id>Q9Z2E1</id>
        <label>Mbd2</label>
    </interactant>
    <organismsDiffer>false</organismsDiffer>
    <experiments>6</experiments>
</comment>
<comment type="interaction">
    <interactant intactId="EBI-5716946">
        <id>Q9Z2E1</id>
    </interactant>
    <interactant intactId="EBI-9396907">
        <id>Q00566</id>
        <label>Mecp2</label>
    </interactant>
    <organismsDiffer>true</organismsDiffer>
    <experiments>9</experiments>
</comment>
<comment type="subcellular location">
    <subcellularLocation>
        <location evidence="1">Nucleus</location>
    </subcellularLocation>
    <subcellularLocation>
        <location evidence="1">Chromosome</location>
    </subcellularLocation>
    <text evidence="1">Nuclear, in discrete foci. Detected at replication foci in late S phase. Localizes to methylated chromatin. Localizes to sites of DNA damage in a manner partially dependent on ZMYND8.</text>
</comment>
<comment type="alternative products">
    <event type="alternative splicing"/>
    <isoform>
        <id>Q9Z2E1-1</id>
        <name>1</name>
        <sequence type="displayed"/>
    </isoform>
    <isoform>
        <id>Q9Z2E1-2</id>
        <name>2</name>
        <sequence type="described" ref="VSP_011079 VSP_011080"/>
    </isoform>
</comment>
<comment type="tissue specificity">
    <text evidence="5">Highly expressed in brain, heart, kidney, lung, skeletal muscle, spleen and testis. Detected at lower levels in embryonic stem cells.</text>
</comment>
<keyword id="KW-0025">Alternative splicing</keyword>
<keyword id="KW-0158">Chromosome</keyword>
<keyword id="KW-0238">DNA-binding</keyword>
<keyword id="KW-0539">Nucleus</keyword>
<keyword id="KW-0597">Phosphoprotein</keyword>
<keyword id="KW-1185">Reference proteome</keyword>
<keyword id="KW-0804">Transcription</keyword>
<keyword id="KW-0805">Transcription regulation</keyword>
<reference key="1">
    <citation type="journal article" date="1998" name="Mol. Cell. Biol.">
        <title>Identification and characterization of a family of mammalian methyl-CpG binding proteins.</title>
        <authorList>
            <person name="Hendrich B."/>
            <person name="Bird A."/>
        </authorList>
    </citation>
    <scope>NUCLEOTIDE SEQUENCE [MRNA] (ISOFORMS 1 AND 2)</scope>
    <scope>FUNCTION</scope>
    <scope>TISSUE SPECIFICITY</scope>
    <scope>SUBCELLULAR LOCATION</scope>
    <source>
        <strain>C57BL/6J</strain>
    </source>
</reference>
<reference key="2">
    <citation type="journal article" date="1999" name="Mamm. Genome">
        <title>Genomic structure and chromosomal mapping of the murine and human mbd1, mbd2, mbd3, and mbd4 genes.</title>
        <authorList>
            <person name="Hendrich B."/>
            <person name="Abbott C."/>
            <person name="McQueen H."/>
            <person name="Chambers D."/>
            <person name="Cross S.H."/>
            <person name="Bird A."/>
        </authorList>
    </citation>
    <scope>NUCLEOTIDE SEQUENCE [GENOMIC DNA]</scope>
    <source>
        <strain>129</strain>
    </source>
</reference>
<reference key="3">
    <citation type="journal article" date="2009" name="PLoS Biol.">
        <title>Lineage-specific biology revealed by a finished genome assembly of the mouse.</title>
        <authorList>
            <person name="Church D.M."/>
            <person name="Goodstadt L."/>
            <person name="Hillier L.W."/>
            <person name="Zody M.C."/>
            <person name="Goldstein S."/>
            <person name="She X."/>
            <person name="Bult C.J."/>
            <person name="Agarwala R."/>
            <person name="Cherry J.L."/>
            <person name="DiCuccio M."/>
            <person name="Hlavina W."/>
            <person name="Kapustin Y."/>
            <person name="Meric P."/>
            <person name="Maglott D."/>
            <person name="Birtle Z."/>
            <person name="Marques A.C."/>
            <person name="Graves T."/>
            <person name="Zhou S."/>
            <person name="Teague B."/>
            <person name="Potamousis K."/>
            <person name="Churas C."/>
            <person name="Place M."/>
            <person name="Herschleb J."/>
            <person name="Runnheim R."/>
            <person name="Forrest D."/>
            <person name="Amos-Landgraf J."/>
            <person name="Schwartz D.C."/>
            <person name="Cheng Z."/>
            <person name="Lindblad-Toh K."/>
            <person name="Eichler E.E."/>
            <person name="Ponting C.P."/>
        </authorList>
    </citation>
    <scope>NUCLEOTIDE SEQUENCE [LARGE SCALE GENOMIC DNA]</scope>
    <source>
        <strain>C57BL/6J</strain>
    </source>
</reference>
<reference key="4">
    <citation type="journal article" date="2004" name="Genome Res.">
        <title>The status, quality, and expansion of the NIH full-length cDNA project: the Mammalian Gene Collection (MGC).</title>
        <authorList>
            <consortium name="The MGC Project Team"/>
        </authorList>
    </citation>
    <scope>NUCLEOTIDE SEQUENCE [LARGE SCALE MRNA] (ISOFORM 1)</scope>
    <source>
        <strain>FVB/N</strain>
        <tissue>Colon</tissue>
    </source>
</reference>
<reference key="5">
    <citation type="journal article" date="2004" name="J. Biol. Chem.">
        <title>Role of human ribosomal RNA (rRNA) promoter methylation and of methyl-CpG-binding protein MBD2 in the suppression of rRNA gene expression.</title>
        <authorList>
            <person name="Ghoshal K."/>
            <person name="Majumder S."/>
            <person name="Datta J."/>
            <person name="Motiwala T."/>
            <person name="Bai S."/>
            <person name="Sharma S.M."/>
            <person name="Frankel W."/>
            <person name="Jacob S.T."/>
        </authorList>
    </citation>
    <scope>FUNCTION</scope>
    <scope>SUBCELLULAR LOCATION</scope>
</reference>
<protein>
    <recommendedName>
        <fullName evidence="7">Methyl-CpG-binding domain protein 2</fullName>
    </recommendedName>
    <alternativeName>
        <fullName>Methyl-CpG-binding protein MBD2</fullName>
    </alternativeName>
</protein>
<dbReference type="EMBL" id="AF072243">
    <property type="protein sequence ID" value="AAC68872.1"/>
    <property type="molecule type" value="mRNA"/>
</dbReference>
<dbReference type="EMBL" id="AF072245">
    <property type="protein sequence ID" value="AAC68874.1"/>
    <property type="molecule type" value="mRNA"/>
</dbReference>
<dbReference type="EMBL" id="AF120986">
    <property type="protein sequence ID" value="AAD50372.1"/>
    <property type="molecule type" value="Genomic_DNA"/>
</dbReference>
<dbReference type="EMBL" id="AF120983">
    <property type="protein sequence ID" value="AAD50372.1"/>
    <property type="status" value="JOINED"/>
    <property type="molecule type" value="Genomic_DNA"/>
</dbReference>
<dbReference type="EMBL" id="AF120984">
    <property type="protein sequence ID" value="AAD50372.1"/>
    <property type="status" value="JOINED"/>
    <property type="molecule type" value="Genomic_DNA"/>
</dbReference>
<dbReference type="EMBL" id="AF120985">
    <property type="protein sequence ID" value="AAD50372.1"/>
    <property type="status" value="JOINED"/>
    <property type="molecule type" value="Genomic_DNA"/>
</dbReference>
<dbReference type="EMBL" id="AF120983">
    <property type="protein sequence ID" value="AAD50373.1"/>
    <property type="molecule type" value="Genomic_DNA"/>
</dbReference>
<dbReference type="EMBL" id="AC134831">
    <property type="status" value="NOT_ANNOTATED_CDS"/>
    <property type="molecule type" value="Genomic_DNA"/>
</dbReference>
<dbReference type="EMBL" id="AC166815">
    <property type="status" value="NOT_ANNOTATED_CDS"/>
    <property type="molecule type" value="Genomic_DNA"/>
</dbReference>
<dbReference type="EMBL" id="AC170591">
    <property type="status" value="NOT_ANNOTATED_CDS"/>
    <property type="molecule type" value="Genomic_DNA"/>
</dbReference>
<dbReference type="EMBL" id="BC046607">
    <property type="protein sequence ID" value="AAH46607.2"/>
    <property type="molecule type" value="mRNA"/>
</dbReference>
<dbReference type="CCDS" id="CCDS29335.1">
    <molecule id="Q9Z2E1-1"/>
</dbReference>
<dbReference type="CCDS" id="CCDS79661.1">
    <molecule id="Q9Z2E1-2"/>
</dbReference>
<dbReference type="RefSeq" id="NP_001298000.1">
    <molecule id="Q9Z2E1-2"/>
    <property type="nucleotide sequence ID" value="NM_001311071.1"/>
</dbReference>
<dbReference type="RefSeq" id="NP_034903.2">
    <molecule id="Q9Z2E1-1"/>
    <property type="nucleotide sequence ID" value="NM_010773.2"/>
</dbReference>
<dbReference type="BMRB" id="Q9Z2E1"/>
<dbReference type="EMDB" id="EMD-21382"/>
<dbReference type="SMR" id="Q9Z2E1"/>
<dbReference type="BioGRID" id="201331">
    <property type="interactions" value="32"/>
</dbReference>
<dbReference type="ComplexPortal" id="CPX-953">
    <property type="entry name" value="MBD2/NuRD nucleosome remodeling and deacetylase complex"/>
</dbReference>
<dbReference type="CORUM" id="Q9Z2E1"/>
<dbReference type="FunCoup" id="Q9Z2E1">
    <property type="interactions" value="2998"/>
</dbReference>
<dbReference type="IntAct" id="Q9Z2E1">
    <property type="interactions" value="24"/>
</dbReference>
<dbReference type="MINT" id="Q9Z2E1"/>
<dbReference type="STRING" id="10090.ENSMUSP00000073701"/>
<dbReference type="GlyGen" id="Q9Z2E1">
    <property type="glycosylation" value="1 site, 1 O-linked glycan (1 site)"/>
</dbReference>
<dbReference type="iPTMnet" id="Q9Z2E1"/>
<dbReference type="PhosphoSitePlus" id="Q9Z2E1"/>
<dbReference type="jPOST" id="Q9Z2E1"/>
<dbReference type="PaxDb" id="10090-ENSMUSP00000073701"/>
<dbReference type="PeptideAtlas" id="Q9Z2E1"/>
<dbReference type="ProteomicsDB" id="295968">
    <molecule id="Q9Z2E1-1"/>
</dbReference>
<dbReference type="ProteomicsDB" id="295969">
    <molecule id="Q9Z2E1-2"/>
</dbReference>
<dbReference type="Pumba" id="Q9Z2E1"/>
<dbReference type="Antibodypedia" id="9530">
    <property type="antibodies" value="388 antibodies from 37 providers"/>
</dbReference>
<dbReference type="DNASU" id="17191"/>
<dbReference type="Ensembl" id="ENSMUST00000074058.11">
    <molecule id="Q9Z2E1-1"/>
    <property type="protein sequence ID" value="ENSMUSP00000073701.5"/>
    <property type="gene ID" value="ENSMUSG00000024513.17"/>
</dbReference>
<dbReference type="Ensembl" id="ENSMUST00000114946.4">
    <molecule id="Q9Z2E1-2"/>
    <property type="protein sequence ID" value="ENSMUSP00000110596.4"/>
    <property type="gene ID" value="ENSMUSG00000024513.17"/>
</dbReference>
<dbReference type="GeneID" id="17191"/>
<dbReference type="KEGG" id="mmu:17191"/>
<dbReference type="UCSC" id="uc008fom.2">
    <molecule id="Q9Z2E1-2"/>
    <property type="organism name" value="mouse"/>
</dbReference>
<dbReference type="UCSC" id="uc008fon.2">
    <molecule id="Q9Z2E1-1"/>
    <property type="organism name" value="mouse"/>
</dbReference>
<dbReference type="AGR" id="MGI:1333813"/>
<dbReference type="CTD" id="8932"/>
<dbReference type="MGI" id="MGI:1333813">
    <property type="gene designation" value="Mbd2"/>
</dbReference>
<dbReference type="VEuPathDB" id="HostDB:ENSMUSG00000024513"/>
<dbReference type="eggNOG" id="KOG4161">
    <property type="taxonomic scope" value="Eukaryota"/>
</dbReference>
<dbReference type="GeneTree" id="ENSGT00950000183005"/>
<dbReference type="HOGENOM" id="CLU_055454_0_0_1"/>
<dbReference type="InParanoid" id="Q9Z2E1"/>
<dbReference type="OMA" id="SGKMPHR"/>
<dbReference type="OrthoDB" id="10072024at2759"/>
<dbReference type="PhylomeDB" id="Q9Z2E1"/>
<dbReference type="TreeFam" id="TF325032"/>
<dbReference type="BioGRID-ORCS" id="17191">
    <property type="hits" value="5 hits in 80 CRISPR screens"/>
</dbReference>
<dbReference type="ChiTaRS" id="Mbd2">
    <property type="organism name" value="mouse"/>
</dbReference>
<dbReference type="PRO" id="PR:Q9Z2E1"/>
<dbReference type="Proteomes" id="UP000000589">
    <property type="component" value="Chromosome 18"/>
</dbReference>
<dbReference type="RNAct" id="Q9Z2E1">
    <property type="molecule type" value="protein"/>
</dbReference>
<dbReference type="Bgee" id="ENSMUSG00000024513">
    <property type="expression patterns" value="Expressed in epithelium of urethra and 279 other cell types or tissues"/>
</dbReference>
<dbReference type="ExpressionAtlas" id="Q9Z2E1">
    <property type="expression patterns" value="baseline and differential"/>
</dbReference>
<dbReference type="GO" id="GO:0000785">
    <property type="term" value="C:chromatin"/>
    <property type="evidence" value="ECO:0000314"/>
    <property type="project" value="MGI"/>
</dbReference>
<dbReference type="GO" id="GO:0005737">
    <property type="term" value="C:cytoplasm"/>
    <property type="evidence" value="ECO:0000314"/>
    <property type="project" value="MGI"/>
</dbReference>
<dbReference type="GO" id="GO:0005829">
    <property type="term" value="C:cytosol"/>
    <property type="evidence" value="ECO:0007669"/>
    <property type="project" value="Ensembl"/>
</dbReference>
<dbReference type="GO" id="GO:0000792">
    <property type="term" value="C:heterochromatin"/>
    <property type="evidence" value="ECO:0000314"/>
    <property type="project" value="MGI"/>
</dbReference>
<dbReference type="GO" id="GO:0000118">
    <property type="term" value="C:histone deacetylase complex"/>
    <property type="evidence" value="ECO:0000314"/>
    <property type="project" value="MGI"/>
</dbReference>
<dbReference type="GO" id="GO:0005634">
    <property type="term" value="C:nucleus"/>
    <property type="evidence" value="ECO:0000314"/>
    <property type="project" value="MGI"/>
</dbReference>
<dbReference type="GO" id="GO:0016581">
    <property type="term" value="C:NuRD complex"/>
    <property type="evidence" value="ECO:0000250"/>
    <property type="project" value="UniProtKB"/>
</dbReference>
<dbReference type="GO" id="GO:0070742">
    <property type="term" value="F:C2H2 zinc finger domain binding"/>
    <property type="evidence" value="ECO:0007669"/>
    <property type="project" value="Ensembl"/>
</dbReference>
<dbReference type="GO" id="GO:0003682">
    <property type="term" value="F:chromatin binding"/>
    <property type="evidence" value="ECO:0000314"/>
    <property type="project" value="MGI"/>
</dbReference>
<dbReference type="GO" id="GO:0003677">
    <property type="term" value="F:DNA binding"/>
    <property type="evidence" value="ECO:0000314"/>
    <property type="project" value="MGI"/>
</dbReference>
<dbReference type="GO" id="GO:0042802">
    <property type="term" value="F:identical protein binding"/>
    <property type="evidence" value="ECO:0000353"/>
    <property type="project" value="IntAct"/>
</dbReference>
<dbReference type="GO" id="GO:0008327">
    <property type="term" value="F:methyl-CpG binding"/>
    <property type="evidence" value="ECO:0000314"/>
    <property type="project" value="MGI"/>
</dbReference>
<dbReference type="GO" id="GO:0003729">
    <property type="term" value="F:mRNA binding"/>
    <property type="evidence" value="ECO:0000314"/>
    <property type="project" value="MGI"/>
</dbReference>
<dbReference type="GO" id="GO:0035197">
    <property type="term" value="F:siRNA binding"/>
    <property type="evidence" value="ECO:0000314"/>
    <property type="project" value="MGI"/>
</dbReference>
<dbReference type="GO" id="GO:0006338">
    <property type="term" value="P:chromatin remodeling"/>
    <property type="evidence" value="ECO:0000250"/>
    <property type="project" value="UniProtKB"/>
</dbReference>
<dbReference type="GO" id="GO:0006346">
    <property type="term" value="P:DNA methylation-dependent constitutive heterochromatin formation"/>
    <property type="evidence" value="ECO:0007669"/>
    <property type="project" value="Ensembl"/>
</dbReference>
<dbReference type="GO" id="GO:0048568">
    <property type="term" value="P:embryonic organ development"/>
    <property type="evidence" value="ECO:0007669"/>
    <property type="project" value="Ensembl"/>
</dbReference>
<dbReference type="GO" id="GO:0042711">
    <property type="term" value="P:maternal behavior"/>
    <property type="evidence" value="ECO:0000315"/>
    <property type="project" value="MGI"/>
</dbReference>
<dbReference type="GO" id="GO:0000122">
    <property type="term" value="P:negative regulation of transcription by RNA polymerase II"/>
    <property type="evidence" value="ECO:0000315"/>
    <property type="project" value="MGI"/>
</dbReference>
<dbReference type="GO" id="GO:0045893">
    <property type="term" value="P:positive regulation of DNA-templated transcription"/>
    <property type="evidence" value="ECO:0000303"/>
    <property type="project" value="ComplexPortal"/>
</dbReference>
<dbReference type="GO" id="GO:0030177">
    <property type="term" value="P:positive regulation of Wnt signaling pathway"/>
    <property type="evidence" value="ECO:0000316"/>
    <property type="project" value="MGI"/>
</dbReference>
<dbReference type="GO" id="GO:0065003">
    <property type="term" value="P:protein-containing complex assembly"/>
    <property type="evidence" value="ECO:0000315"/>
    <property type="project" value="MGI"/>
</dbReference>
<dbReference type="GO" id="GO:0042127">
    <property type="term" value="P:regulation of cell population proliferation"/>
    <property type="evidence" value="ECO:0000316"/>
    <property type="project" value="MGI"/>
</dbReference>
<dbReference type="GO" id="GO:0032355">
    <property type="term" value="P:response to estradiol"/>
    <property type="evidence" value="ECO:0007669"/>
    <property type="project" value="Ensembl"/>
</dbReference>
<dbReference type="GO" id="GO:0009612">
    <property type="term" value="P:response to mechanical stimulus"/>
    <property type="evidence" value="ECO:0007669"/>
    <property type="project" value="Ensembl"/>
</dbReference>
<dbReference type="GO" id="GO:0031667">
    <property type="term" value="P:response to nutrient levels"/>
    <property type="evidence" value="ECO:0007669"/>
    <property type="project" value="Ensembl"/>
</dbReference>
<dbReference type="GO" id="GO:0003229">
    <property type="term" value="P:ventricular cardiac muscle tissue development"/>
    <property type="evidence" value="ECO:0007669"/>
    <property type="project" value="Ensembl"/>
</dbReference>
<dbReference type="GO" id="GO:0016055">
    <property type="term" value="P:Wnt signaling pathway"/>
    <property type="evidence" value="ECO:0000316"/>
    <property type="project" value="MGI"/>
</dbReference>
<dbReference type="CDD" id="cd01396">
    <property type="entry name" value="MeCP2_MBD"/>
    <property type="match status" value="1"/>
</dbReference>
<dbReference type="FunFam" id="3.30.890.10:FF:000003">
    <property type="entry name" value="methyl-CpG-binding domain protein 2"/>
    <property type="match status" value="1"/>
</dbReference>
<dbReference type="Gene3D" id="3.30.890.10">
    <property type="entry name" value="Methyl-cpg-binding Protein 2, Chain A"/>
    <property type="match status" value="1"/>
</dbReference>
<dbReference type="InterPro" id="IPR016177">
    <property type="entry name" value="DNA-bd_dom_sf"/>
</dbReference>
<dbReference type="InterPro" id="IPR032343">
    <property type="entry name" value="MBD2/MBD3_p55-bd"/>
</dbReference>
<dbReference type="InterPro" id="IPR025884">
    <property type="entry name" value="MeCpG-bd_2/3_C_dom"/>
</dbReference>
<dbReference type="InterPro" id="IPR001739">
    <property type="entry name" value="Methyl_CpG_DNA-bd"/>
</dbReference>
<dbReference type="PANTHER" id="PTHR12396">
    <property type="entry name" value="METHYL-CPG BINDING PROTEIN, MBD"/>
    <property type="match status" value="1"/>
</dbReference>
<dbReference type="PANTHER" id="PTHR12396:SF5">
    <property type="entry name" value="METHYL-CPG-BINDING DOMAIN PROTEIN 2"/>
    <property type="match status" value="1"/>
</dbReference>
<dbReference type="Pfam" id="PF01429">
    <property type="entry name" value="MBD"/>
    <property type="match status" value="1"/>
</dbReference>
<dbReference type="Pfam" id="PF14048">
    <property type="entry name" value="MBD_C"/>
    <property type="match status" value="1"/>
</dbReference>
<dbReference type="Pfam" id="PF16564">
    <property type="entry name" value="MBDa"/>
    <property type="match status" value="1"/>
</dbReference>
<dbReference type="SMART" id="SM00391">
    <property type="entry name" value="MBD"/>
    <property type="match status" value="1"/>
</dbReference>
<dbReference type="SUPFAM" id="SSF54171">
    <property type="entry name" value="DNA-binding domain"/>
    <property type="match status" value="1"/>
</dbReference>
<dbReference type="PROSITE" id="PS50982">
    <property type="entry name" value="MBD"/>
    <property type="match status" value="1"/>
</dbReference>
<proteinExistence type="evidence at protein level"/>
<organism>
    <name type="scientific">Mus musculus</name>
    <name type="common">Mouse</name>
    <dbReference type="NCBI Taxonomy" id="10090"/>
    <lineage>
        <taxon>Eukaryota</taxon>
        <taxon>Metazoa</taxon>
        <taxon>Chordata</taxon>
        <taxon>Craniata</taxon>
        <taxon>Vertebrata</taxon>
        <taxon>Euteleostomi</taxon>
        <taxon>Mammalia</taxon>
        <taxon>Eutheria</taxon>
        <taxon>Euarchontoglires</taxon>
        <taxon>Glires</taxon>
        <taxon>Rodentia</taxon>
        <taxon>Myomorpha</taxon>
        <taxon>Muroidea</taxon>
        <taxon>Muridae</taxon>
        <taxon>Murinae</taxon>
        <taxon>Mus</taxon>
        <taxon>Mus</taxon>
    </lineage>
</organism>
<sequence length="414" mass="43501">MRAHPGGGRCCPEQEEGESAAGGSGAGGDSAIEQGGQGSALAPSPVSGVRREGARGGGRGRGRWKQAARGGGVCGRGRGRGRGRGRGRGRGRGRGRPQSGGSGLGGDGGGGAGGCGGGSGGGVAPRRDPVPFPSGSSGPGPRGPRATESGKRMDCPALPPGWKKEEVIRKSGLSAGKSDVYYFSPSGKKFRSKPQLARYLGNAVDLSSFDFRTGKMMPSKLQKNKQRLRNDPLNQNKGKPDLNTTLPIRQTASIFKQPVTKFTNHPSNKVKSDPQRMNEQPRQLFWEKRLQGLSASDVTEQIIKTMELPKGLQGVGPGSNDETLLSAVASALHTSSAPITGQVSAAVEKNPAVWLNTSQPLCKAFIVTDEDIRKQEERVQQVRKKLEEALMADILSRAADTEEVDIDMDSGDEA</sequence>
<feature type="chain" id="PRO_0000096261" description="Methyl-CpG-binding domain protein 2">
    <location>
        <begin position="1"/>
        <end position="414"/>
    </location>
</feature>
<feature type="domain" description="MBD" evidence="2">
    <location>
        <begin position="148"/>
        <end position="216"/>
    </location>
</feature>
<feature type="region of interest" description="Disordered" evidence="3">
    <location>
        <begin position="1"/>
        <end position="163"/>
    </location>
</feature>
<feature type="region of interest" description="Required for interaction with DHX9 and PRMT5" evidence="1">
    <location>
        <begin position="1"/>
        <end position="152"/>
    </location>
</feature>
<feature type="region of interest" description="Disordered" evidence="3">
    <location>
        <begin position="217"/>
        <end position="244"/>
    </location>
</feature>
<feature type="compositionally biased region" description="Basic residues" evidence="3">
    <location>
        <begin position="77"/>
        <end position="95"/>
    </location>
</feature>
<feature type="compositionally biased region" description="Gly residues" evidence="3">
    <location>
        <begin position="98"/>
        <end position="123"/>
    </location>
</feature>
<feature type="compositionally biased region" description="Polar residues" evidence="3">
    <location>
        <begin position="232"/>
        <end position="244"/>
    </location>
</feature>
<feature type="modified residue" description="Phosphoserine" evidence="1">
    <location>
        <position position="184"/>
    </location>
</feature>
<feature type="modified residue" description="Phosphoserine" evidence="1">
    <location>
        <position position="410"/>
    </location>
</feature>
<feature type="splice variant" id="VSP_011079" description="In isoform 2." evidence="6">
    <original>GKPDLNTTLPIR</original>
    <variation>FRLIKKQTLIGL</variation>
    <location>
        <begin position="238"/>
        <end position="249"/>
    </location>
</feature>
<feature type="splice variant" id="VSP_011080" description="In isoform 2." evidence="6">
    <location>
        <begin position="250"/>
        <end position="414"/>
    </location>
</feature>
<feature type="sequence conflict" description="In Ref. 1; AAC68872/AAC68874, 2; AAD50372/AAD50373 and 4; AAH46607." evidence="7" ref="1 2 4">
    <original>G</original>
    <variation>V</variation>
    <location>
        <position position="117"/>
    </location>
</feature>
<gene>
    <name evidence="8" type="primary">Mbd2</name>
</gene>
<name>MBD2_MOUSE</name>
<evidence type="ECO:0000250" key="1">
    <source>
        <dbReference type="UniProtKB" id="Q9UBB5"/>
    </source>
</evidence>
<evidence type="ECO:0000255" key="2">
    <source>
        <dbReference type="PROSITE-ProRule" id="PRU00338"/>
    </source>
</evidence>
<evidence type="ECO:0000256" key="3">
    <source>
        <dbReference type="SAM" id="MobiDB-lite"/>
    </source>
</evidence>
<evidence type="ECO:0000269" key="4">
    <source>
    </source>
</evidence>
<evidence type="ECO:0000269" key="5">
    <source>
    </source>
</evidence>
<evidence type="ECO:0000303" key="6">
    <source>
    </source>
</evidence>
<evidence type="ECO:0000305" key="7"/>
<evidence type="ECO:0000312" key="8">
    <source>
        <dbReference type="MGI" id="MGI:1333813"/>
    </source>
</evidence>
<accession>Q9Z2E1</accession>
<accession>E9QMV9</accession>
<accession>Q811D9</accession>
<accession>Q9Z2D9</accession>